<organism>
    <name type="scientific">Acinetobacter baumannii (strain AB307-0294)</name>
    <dbReference type="NCBI Taxonomy" id="557600"/>
    <lineage>
        <taxon>Bacteria</taxon>
        <taxon>Pseudomonadati</taxon>
        <taxon>Pseudomonadota</taxon>
        <taxon>Gammaproteobacteria</taxon>
        <taxon>Moraxellales</taxon>
        <taxon>Moraxellaceae</taxon>
        <taxon>Acinetobacter</taxon>
        <taxon>Acinetobacter calcoaceticus/baumannii complex</taxon>
    </lineage>
</organism>
<protein>
    <recommendedName>
        <fullName evidence="1">dCTP deaminase</fullName>
        <ecNumber evidence="1">3.5.4.13</ecNumber>
    </recommendedName>
    <alternativeName>
        <fullName evidence="1">Deoxycytidine triphosphate deaminase</fullName>
    </alternativeName>
</protein>
<proteinExistence type="inferred from homology"/>
<sequence>MAIKSDRWIREMSEKHGMIEPYAENQVRFDKNGEKLISYGVSSYGYDVRCAREFKVFTNVHSAIVDPKNFDEKSFIDIESDVCIIPPNSFALARTIEYFRIPRNVLTVCLGKSTYARCGIIVNVTPLEPEWEGHVTLEFSNTTNLPARIYAGEGVAQMLFFESDEVCETSYKDRGGKYQGQTGVTLPKT</sequence>
<comment type="function">
    <text evidence="1">Catalyzes the deamination of dCTP to dUTP.</text>
</comment>
<comment type="catalytic activity">
    <reaction evidence="1">
        <text>dCTP + H2O + H(+) = dUTP + NH4(+)</text>
        <dbReference type="Rhea" id="RHEA:22680"/>
        <dbReference type="ChEBI" id="CHEBI:15377"/>
        <dbReference type="ChEBI" id="CHEBI:15378"/>
        <dbReference type="ChEBI" id="CHEBI:28938"/>
        <dbReference type="ChEBI" id="CHEBI:61481"/>
        <dbReference type="ChEBI" id="CHEBI:61555"/>
        <dbReference type="EC" id="3.5.4.13"/>
    </reaction>
</comment>
<comment type="pathway">
    <text evidence="1">Pyrimidine metabolism; dUMP biosynthesis; dUMP from dCTP (dUTP route): step 1/2.</text>
</comment>
<comment type="subunit">
    <text evidence="1">Homotrimer.</text>
</comment>
<comment type="similarity">
    <text evidence="1">Belongs to the dCTP deaminase family.</text>
</comment>
<evidence type="ECO:0000255" key="1">
    <source>
        <dbReference type="HAMAP-Rule" id="MF_00146"/>
    </source>
</evidence>
<dbReference type="EC" id="3.5.4.13" evidence="1"/>
<dbReference type="EMBL" id="CP001172">
    <property type="protein sequence ID" value="ACJ56203.1"/>
    <property type="molecule type" value="Genomic_DNA"/>
</dbReference>
<dbReference type="RefSeq" id="WP_000985728.1">
    <property type="nucleotide sequence ID" value="NZ_CP001172.1"/>
</dbReference>
<dbReference type="SMR" id="B7GZ86"/>
<dbReference type="GeneID" id="92892716"/>
<dbReference type="HOGENOM" id="CLU_087476_4_0_6"/>
<dbReference type="UniPathway" id="UPA00610">
    <property type="reaction ID" value="UER00665"/>
</dbReference>
<dbReference type="Proteomes" id="UP000006924">
    <property type="component" value="Chromosome"/>
</dbReference>
<dbReference type="GO" id="GO:0008829">
    <property type="term" value="F:dCTP deaminase activity"/>
    <property type="evidence" value="ECO:0007669"/>
    <property type="project" value="UniProtKB-UniRule"/>
</dbReference>
<dbReference type="GO" id="GO:0000166">
    <property type="term" value="F:nucleotide binding"/>
    <property type="evidence" value="ECO:0007669"/>
    <property type="project" value="UniProtKB-KW"/>
</dbReference>
<dbReference type="GO" id="GO:0006226">
    <property type="term" value="P:dUMP biosynthetic process"/>
    <property type="evidence" value="ECO:0007669"/>
    <property type="project" value="UniProtKB-UniPathway"/>
</dbReference>
<dbReference type="GO" id="GO:0006229">
    <property type="term" value="P:dUTP biosynthetic process"/>
    <property type="evidence" value="ECO:0007669"/>
    <property type="project" value="UniProtKB-UniRule"/>
</dbReference>
<dbReference type="GO" id="GO:0015949">
    <property type="term" value="P:nucleobase-containing small molecule interconversion"/>
    <property type="evidence" value="ECO:0007669"/>
    <property type="project" value="TreeGrafter"/>
</dbReference>
<dbReference type="CDD" id="cd07557">
    <property type="entry name" value="trimeric_dUTPase"/>
    <property type="match status" value="1"/>
</dbReference>
<dbReference type="FunFam" id="2.70.40.10:FF:000001">
    <property type="entry name" value="dCTP deaminase"/>
    <property type="match status" value="1"/>
</dbReference>
<dbReference type="Gene3D" id="2.70.40.10">
    <property type="match status" value="1"/>
</dbReference>
<dbReference type="HAMAP" id="MF_00146">
    <property type="entry name" value="dCTP_deaminase"/>
    <property type="match status" value="1"/>
</dbReference>
<dbReference type="InterPro" id="IPR011962">
    <property type="entry name" value="dCTP_deaminase"/>
</dbReference>
<dbReference type="InterPro" id="IPR036157">
    <property type="entry name" value="dUTPase-like_sf"/>
</dbReference>
<dbReference type="InterPro" id="IPR033704">
    <property type="entry name" value="dUTPase_trimeric"/>
</dbReference>
<dbReference type="NCBIfam" id="TIGR02274">
    <property type="entry name" value="dCTP_deam"/>
    <property type="match status" value="1"/>
</dbReference>
<dbReference type="PANTHER" id="PTHR42680">
    <property type="entry name" value="DCTP DEAMINASE"/>
    <property type="match status" value="1"/>
</dbReference>
<dbReference type="PANTHER" id="PTHR42680:SF3">
    <property type="entry name" value="DCTP DEAMINASE"/>
    <property type="match status" value="1"/>
</dbReference>
<dbReference type="Pfam" id="PF22769">
    <property type="entry name" value="DCD"/>
    <property type="match status" value="1"/>
</dbReference>
<dbReference type="SUPFAM" id="SSF51283">
    <property type="entry name" value="dUTPase-like"/>
    <property type="match status" value="1"/>
</dbReference>
<keyword id="KW-0378">Hydrolase</keyword>
<keyword id="KW-0546">Nucleotide metabolism</keyword>
<keyword id="KW-0547">Nucleotide-binding</keyword>
<feature type="chain" id="PRO_1000189822" description="dCTP deaminase">
    <location>
        <begin position="1"/>
        <end position="189"/>
    </location>
</feature>
<feature type="active site" description="Proton donor/acceptor" evidence="1">
    <location>
        <position position="138"/>
    </location>
</feature>
<feature type="binding site" evidence="1">
    <location>
        <begin position="112"/>
        <end position="117"/>
    </location>
    <ligand>
        <name>dCTP</name>
        <dbReference type="ChEBI" id="CHEBI:61481"/>
    </ligand>
</feature>
<feature type="binding site" evidence="1">
    <location>
        <begin position="136"/>
        <end position="138"/>
    </location>
    <ligand>
        <name>dCTP</name>
        <dbReference type="ChEBI" id="CHEBI:61481"/>
    </ligand>
</feature>
<feature type="binding site" evidence="1">
    <location>
        <position position="157"/>
    </location>
    <ligand>
        <name>dCTP</name>
        <dbReference type="ChEBI" id="CHEBI:61481"/>
    </ligand>
</feature>
<feature type="binding site" evidence="1">
    <location>
        <position position="171"/>
    </location>
    <ligand>
        <name>dCTP</name>
        <dbReference type="ChEBI" id="CHEBI:61481"/>
    </ligand>
</feature>
<feature type="binding site" evidence="1">
    <location>
        <position position="181"/>
    </location>
    <ligand>
        <name>dCTP</name>
        <dbReference type="ChEBI" id="CHEBI:61481"/>
    </ligand>
</feature>
<gene>
    <name evidence="1" type="primary">dcd</name>
    <name type="ordered locus">ABBFA_002827</name>
</gene>
<name>DCD_ACIB3</name>
<reference key="1">
    <citation type="journal article" date="2008" name="J. Bacteriol.">
        <title>Comparative genome sequence analysis of multidrug-resistant Acinetobacter baumannii.</title>
        <authorList>
            <person name="Adams M.D."/>
            <person name="Goglin K."/>
            <person name="Molyneaux N."/>
            <person name="Hujer K.M."/>
            <person name="Lavender H."/>
            <person name="Jamison J.J."/>
            <person name="MacDonald I.J."/>
            <person name="Martin K.M."/>
            <person name="Russo T."/>
            <person name="Campagnari A.A."/>
            <person name="Hujer A.M."/>
            <person name="Bonomo R.A."/>
            <person name="Gill S.R."/>
        </authorList>
    </citation>
    <scope>NUCLEOTIDE SEQUENCE [LARGE SCALE GENOMIC DNA]</scope>
    <source>
        <strain>AB307-0294</strain>
    </source>
</reference>
<accession>B7GZ86</accession>